<feature type="chain" id="PRO_0000094890" description="Tyrosine-protein phosphatase 2">
    <location>
        <begin position="1" status="less than"/>
        <end position="127" status="greater than"/>
    </location>
</feature>
<feature type="domain" description="Tyrosine-protein phosphatase" evidence="1">
    <location>
        <begin position="1" status="less than"/>
        <end position="127" status="greater than"/>
    </location>
</feature>
<feature type="region of interest" description="Disordered" evidence="3">
    <location>
        <begin position="63"/>
        <end position="82"/>
    </location>
</feature>
<feature type="compositionally biased region" description="Acidic residues" evidence="3">
    <location>
        <begin position="63"/>
        <end position="81"/>
    </location>
</feature>
<feature type="non-terminal residue">
    <location>
        <position position="1"/>
    </location>
</feature>
<feature type="non-terminal residue">
    <location>
        <position position="127"/>
    </location>
</feature>
<gene>
    <name type="primary">STY-2</name>
</gene>
<proteinExistence type="evidence at transcript level"/>
<evidence type="ECO:0000255" key="1">
    <source>
        <dbReference type="PROSITE-ProRule" id="PRU00160"/>
    </source>
</evidence>
<evidence type="ECO:0000255" key="2">
    <source>
        <dbReference type="PROSITE-ProRule" id="PRU10044"/>
    </source>
</evidence>
<evidence type="ECO:0000256" key="3">
    <source>
        <dbReference type="SAM" id="MobiDB-lite"/>
    </source>
</evidence>
<evidence type="ECO:0000305" key="4"/>
<keyword id="KW-0378">Hydrolase</keyword>
<keyword id="KW-0904">Protein phosphatase</keyword>
<sequence length="127" mass="14707">QGSKVIVMVTDLRESGKPKCERYFPENGEGVEYGSIHVETTQVTSYGGYQQRILAVKLAEEEVYDNDDGTEQNDEQTEEEPEVRYITHLQCKRWPDHGVPKSTSAIFRLYYKMLEYRPRDCEAPILV</sequence>
<comment type="catalytic activity">
    <reaction evidence="2">
        <text>O-phospho-L-tyrosyl-[protein] + H2O = L-tyrosyl-[protein] + phosphate</text>
        <dbReference type="Rhea" id="RHEA:10684"/>
        <dbReference type="Rhea" id="RHEA-COMP:10136"/>
        <dbReference type="Rhea" id="RHEA-COMP:20101"/>
        <dbReference type="ChEBI" id="CHEBI:15377"/>
        <dbReference type="ChEBI" id="CHEBI:43474"/>
        <dbReference type="ChEBI" id="CHEBI:46858"/>
        <dbReference type="ChEBI" id="CHEBI:61978"/>
        <dbReference type="EC" id="3.1.3.48"/>
    </reaction>
</comment>
<comment type="similarity">
    <text evidence="4">Belongs to the protein-tyrosine phosphatase family.</text>
</comment>
<protein>
    <recommendedName>
        <fullName>Tyrosine-protein phosphatase 2</fullName>
        <ecNumber>3.1.3.48</ecNumber>
    </recommendedName>
</protein>
<reference key="1">
    <citation type="journal article" date="1991" name="Immunogenetics">
        <title>Protein tyrosine phosphatase domains from the protochordate Styela plicata.</title>
        <authorList>
            <person name="Matthews R.J."/>
            <person name="Flores E."/>
            <person name="Thomas M.L."/>
        </authorList>
    </citation>
    <scope>NUCLEOTIDE SEQUENCE [MRNA]</scope>
</reference>
<name>PTP2_STYPL</name>
<dbReference type="EC" id="3.1.3.48"/>
<dbReference type="EMBL" id="M37987">
    <property type="protein sequence ID" value="AAA29820.1"/>
    <property type="molecule type" value="mRNA"/>
</dbReference>
<dbReference type="SMR" id="P28194"/>
<dbReference type="GO" id="GO:0004725">
    <property type="term" value="F:protein tyrosine phosphatase activity"/>
    <property type="evidence" value="ECO:0007669"/>
    <property type="project" value="UniProtKB-EC"/>
</dbReference>
<dbReference type="Gene3D" id="3.90.190.10">
    <property type="entry name" value="Protein tyrosine phosphatase superfamily"/>
    <property type="match status" value="1"/>
</dbReference>
<dbReference type="InterPro" id="IPR029021">
    <property type="entry name" value="Prot-tyrosine_phosphatase-like"/>
</dbReference>
<dbReference type="InterPro" id="IPR050348">
    <property type="entry name" value="Protein-Tyr_Phosphatase"/>
</dbReference>
<dbReference type="InterPro" id="IPR000242">
    <property type="entry name" value="PTP_cat"/>
</dbReference>
<dbReference type="PANTHER" id="PTHR19134">
    <property type="entry name" value="RECEPTOR-TYPE TYROSINE-PROTEIN PHOSPHATASE"/>
    <property type="match status" value="1"/>
</dbReference>
<dbReference type="PANTHER" id="PTHR19134:SF527">
    <property type="entry name" value="TYROSINE-PROTEIN PHOSPHATASE NON-RECEPTOR TYPE 7"/>
    <property type="match status" value="1"/>
</dbReference>
<dbReference type="Pfam" id="PF00102">
    <property type="entry name" value="Y_phosphatase"/>
    <property type="match status" value="1"/>
</dbReference>
<dbReference type="SUPFAM" id="SSF52799">
    <property type="entry name" value="(Phosphotyrosine protein) phosphatases II"/>
    <property type="match status" value="1"/>
</dbReference>
<dbReference type="PROSITE" id="PS50055">
    <property type="entry name" value="TYR_PHOSPHATASE_PTP"/>
    <property type="match status" value="1"/>
</dbReference>
<accession>P28194</accession>
<organism>
    <name type="scientific">Styela plicata</name>
    <name type="common">Wrinkled sea squirt</name>
    <name type="synonym">Ascidia plicata</name>
    <dbReference type="NCBI Taxonomy" id="7726"/>
    <lineage>
        <taxon>Eukaryota</taxon>
        <taxon>Metazoa</taxon>
        <taxon>Chordata</taxon>
        <taxon>Tunicata</taxon>
        <taxon>Ascidiacea</taxon>
        <taxon>Stolidobranchia</taxon>
        <taxon>Styelidae</taxon>
        <taxon>Styela</taxon>
    </lineage>
</organism>